<keyword id="KW-0067">ATP-binding</keyword>
<keyword id="KW-0547">Nucleotide-binding</keyword>
<feature type="chain" id="PRO_1000137118" description="UPF0200 protein OE_4442F">
    <location>
        <begin position="1"/>
        <end position="190"/>
    </location>
</feature>
<feature type="region of interest" description="Disordered" evidence="2">
    <location>
        <begin position="120"/>
        <end position="144"/>
    </location>
</feature>
<feature type="binding site" evidence="1">
    <location>
        <begin position="8"/>
        <end position="15"/>
    </location>
    <ligand>
        <name>ATP</name>
        <dbReference type="ChEBI" id="CHEBI:30616"/>
    </ligand>
</feature>
<comment type="similarity">
    <text evidence="1">Belongs to the UPF0200 family.</text>
</comment>
<organism>
    <name type="scientific">Halobacterium salinarum (strain ATCC 29341 / DSM 671 / R1)</name>
    <dbReference type="NCBI Taxonomy" id="478009"/>
    <lineage>
        <taxon>Archaea</taxon>
        <taxon>Methanobacteriati</taxon>
        <taxon>Methanobacteriota</taxon>
        <taxon>Stenosarchaea group</taxon>
        <taxon>Halobacteria</taxon>
        <taxon>Halobacteriales</taxon>
        <taxon>Halobacteriaceae</taxon>
        <taxon>Halobacterium</taxon>
        <taxon>Halobacterium salinarum NRC-34001</taxon>
    </lineage>
</organism>
<evidence type="ECO:0000255" key="1">
    <source>
        <dbReference type="HAMAP-Rule" id="MF_01111"/>
    </source>
</evidence>
<evidence type="ECO:0000256" key="2">
    <source>
        <dbReference type="SAM" id="MobiDB-lite"/>
    </source>
</evidence>
<protein>
    <recommendedName>
        <fullName evidence="1">UPF0200 protein OE_4442F</fullName>
    </recommendedName>
</protein>
<accession>B0R7W8</accession>
<proteinExistence type="inferred from homology"/>
<name>Y4442_HALS3</name>
<dbReference type="EMBL" id="AM774415">
    <property type="protein sequence ID" value="CAP14837.1"/>
    <property type="molecule type" value="Genomic_DNA"/>
</dbReference>
<dbReference type="RefSeq" id="WP_010903833.1">
    <property type="nucleotide sequence ID" value="NC_010364.1"/>
</dbReference>
<dbReference type="SMR" id="B0R7W8"/>
<dbReference type="EnsemblBacteria" id="CAP14837">
    <property type="protein sequence ID" value="CAP14837"/>
    <property type="gene ID" value="OE_4442F"/>
</dbReference>
<dbReference type="KEGG" id="hsl:OE_4442F"/>
<dbReference type="HOGENOM" id="CLU_096329_0_0_2"/>
<dbReference type="PhylomeDB" id="B0R7W8"/>
<dbReference type="Proteomes" id="UP000001321">
    <property type="component" value="Chromosome"/>
</dbReference>
<dbReference type="GO" id="GO:0005524">
    <property type="term" value="F:ATP binding"/>
    <property type="evidence" value="ECO:0007669"/>
    <property type="project" value="UniProtKB-UniRule"/>
</dbReference>
<dbReference type="Gene3D" id="3.40.50.300">
    <property type="entry name" value="P-loop containing nucleotide triphosphate hydrolases"/>
    <property type="match status" value="1"/>
</dbReference>
<dbReference type="HAMAP" id="MF_01111">
    <property type="entry name" value="UPF0200"/>
    <property type="match status" value="1"/>
</dbReference>
<dbReference type="InterPro" id="IPR022970">
    <property type="entry name" value="NTP_hydrolase-rel"/>
</dbReference>
<dbReference type="InterPro" id="IPR027417">
    <property type="entry name" value="P-loop_NTPase"/>
</dbReference>
<dbReference type="PANTHER" id="PTHR41930:SF1">
    <property type="entry name" value="DEPHOSPHO-COA KINASE"/>
    <property type="match status" value="1"/>
</dbReference>
<dbReference type="PANTHER" id="PTHR41930">
    <property type="entry name" value="UPF0200 PROTEIN MJ1399"/>
    <property type="match status" value="1"/>
</dbReference>
<dbReference type="Pfam" id="PF13207">
    <property type="entry name" value="AAA_17"/>
    <property type="match status" value="1"/>
</dbReference>
<dbReference type="SUPFAM" id="SSF52540">
    <property type="entry name" value="P-loop containing nucleoside triphosphate hydrolases"/>
    <property type="match status" value="1"/>
</dbReference>
<gene>
    <name type="ordered locus">OE_4442F</name>
</gene>
<sequence length="190" mass="20626">MRVIGTVGMPGSGKSEAATVAANAGIPVLVMGDVIRQECRDRGLDPAQHHGRIAQALRDEHGPGAIAHQSLPIIEDHLTDATTVLVDGIRSDVEVTTFRDAFGDDFTLVHVSAPRELRKARIEDRDRPGDTDGEPLDAREDRERGFGMDDAIDLADVRIENTDSLDAFHDAVRDLLAADTPHTEVPDNHD</sequence>
<reference key="1">
    <citation type="journal article" date="2008" name="Genomics">
        <title>Evolution in the laboratory: the genome of Halobacterium salinarum strain R1 compared to that of strain NRC-1.</title>
        <authorList>
            <person name="Pfeiffer F."/>
            <person name="Schuster S.C."/>
            <person name="Broicher A."/>
            <person name="Falb M."/>
            <person name="Palm P."/>
            <person name="Rodewald K."/>
            <person name="Ruepp A."/>
            <person name="Soppa J."/>
            <person name="Tittor J."/>
            <person name="Oesterhelt D."/>
        </authorList>
    </citation>
    <scope>NUCLEOTIDE SEQUENCE [LARGE SCALE GENOMIC DNA]</scope>
    <source>
        <strain>ATCC 29341 / DSM 671 / R1</strain>
    </source>
</reference>